<gene>
    <name evidence="1" type="primary">adk</name>
    <name type="ordered locus">Mthe_1504</name>
</gene>
<keyword id="KW-0067">ATP-binding</keyword>
<keyword id="KW-0963">Cytoplasm</keyword>
<keyword id="KW-0418">Kinase</keyword>
<keyword id="KW-0479">Metal-binding</keyword>
<keyword id="KW-0545">Nucleotide biosynthesis</keyword>
<keyword id="KW-0547">Nucleotide-binding</keyword>
<keyword id="KW-1185">Reference proteome</keyword>
<keyword id="KW-0808">Transferase</keyword>
<keyword id="KW-0862">Zinc</keyword>
<comment type="function">
    <text evidence="1">Catalyzes the reversible transfer of the terminal phosphate group between ATP and AMP. Plays an important role in cellular energy homeostasis and in adenine nucleotide metabolism.</text>
</comment>
<comment type="catalytic activity">
    <reaction evidence="1">
        <text>AMP + ATP = 2 ADP</text>
        <dbReference type="Rhea" id="RHEA:12973"/>
        <dbReference type="ChEBI" id="CHEBI:30616"/>
        <dbReference type="ChEBI" id="CHEBI:456215"/>
        <dbReference type="ChEBI" id="CHEBI:456216"/>
        <dbReference type="EC" id="2.7.4.3"/>
    </reaction>
</comment>
<comment type="pathway">
    <text evidence="1">Purine metabolism; AMP biosynthesis via salvage pathway; AMP from ADP: step 1/1.</text>
</comment>
<comment type="subunit">
    <text evidence="1">Monomer.</text>
</comment>
<comment type="subcellular location">
    <subcellularLocation>
        <location evidence="1">Cytoplasm</location>
    </subcellularLocation>
</comment>
<comment type="domain">
    <text evidence="1">Consists of three domains, a large central CORE domain and two small peripheral domains, NMPbind and LID, which undergo movements during catalysis. The LID domain closes over the site of phosphoryl transfer upon ATP binding. Assembling and dissambling the active center during each catalytic cycle provides an effective means to prevent ATP hydrolysis. Some bacteria have evolved a zinc-coordinating structure that stabilizes the LID domain.</text>
</comment>
<comment type="similarity">
    <text evidence="1">Belongs to the adenylate kinase family.</text>
</comment>
<proteinExistence type="inferred from homology"/>
<evidence type="ECO:0000255" key="1">
    <source>
        <dbReference type="HAMAP-Rule" id="MF_00235"/>
    </source>
</evidence>
<organism>
    <name type="scientific">Methanothrix thermoacetophila (strain DSM 6194 / JCM 14653 / NBRC 101360 / PT)</name>
    <name type="common">Methanosaeta thermophila</name>
    <dbReference type="NCBI Taxonomy" id="349307"/>
    <lineage>
        <taxon>Archaea</taxon>
        <taxon>Methanobacteriati</taxon>
        <taxon>Methanobacteriota</taxon>
        <taxon>Stenosarchaea group</taxon>
        <taxon>Methanomicrobia</taxon>
        <taxon>Methanotrichales</taxon>
        <taxon>Methanotrichaceae</taxon>
        <taxon>Methanothrix</taxon>
    </lineage>
</organism>
<dbReference type="EC" id="2.7.4.3" evidence="1"/>
<dbReference type="EMBL" id="CP000477">
    <property type="protein sequence ID" value="ABK15276.1"/>
    <property type="molecule type" value="Genomic_DNA"/>
</dbReference>
<dbReference type="RefSeq" id="WP_011696668.1">
    <property type="nucleotide sequence ID" value="NC_008553.1"/>
</dbReference>
<dbReference type="SMR" id="A0B9A2"/>
<dbReference type="STRING" id="349307.Mthe_1504"/>
<dbReference type="GeneID" id="4462895"/>
<dbReference type="KEGG" id="mtp:Mthe_1504"/>
<dbReference type="HOGENOM" id="CLU_032354_1_2_2"/>
<dbReference type="OrthoDB" id="31230at2157"/>
<dbReference type="UniPathway" id="UPA00588">
    <property type="reaction ID" value="UER00649"/>
</dbReference>
<dbReference type="Proteomes" id="UP000000674">
    <property type="component" value="Chromosome"/>
</dbReference>
<dbReference type="GO" id="GO:0005737">
    <property type="term" value="C:cytoplasm"/>
    <property type="evidence" value="ECO:0007669"/>
    <property type="project" value="UniProtKB-SubCell"/>
</dbReference>
<dbReference type="GO" id="GO:0004017">
    <property type="term" value="F:adenylate kinase activity"/>
    <property type="evidence" value="ECO:0007669"/>
    <property type="project" value="UniProtKB-UniRule"/>
</dbReference>
<dbReference type="GO" id="GO:0005524">
    <property type="term" value="F:ATP binding"/>
    <property type="evidence" value="ECO:0007669"/>
    <property type="project" value="UniProtKB-UniRule"/>
</dbReference>
<dbReference type="GO" id="GO:0008270">
    <property type="term" value="F:zinc ion binding"/>
    <property type="evidence" value="ECO:0007669"/>
    <property type="project" value="UniProtKB-UniRule"/>
</dbReference>
<dbReference type="GO" id="GO:0044209">
    <property type="term" value="P:AMP salvage"/>
    <property type="evidence" value="ECO:0007669"/>
    <property type="project" value="UniProtKB-UniRule"/>
</dbReference>
<dbReference type="CDD" id="cd01428">
    <property type="entry name" value="ADK"/>
    <property type="match status" value="1"/>
</dbReference>
<dbReference type="FunFam" id="3.40.50.300:FF:000106">
    <property type="entry name" value="Adenylate kinase mitochondrial"/>
    <property type="match status" value="1"/>
</dbReference>
<dbReference type="Gene3D" id="3.40.50.300">
    <property type="entry name" value="P-loop containing nucleotide triphosphate hydrolases"/>
    <property type="match status" value="1"/>
</dbReference>
<dbReference type="HAMAP" id="MF_00235">
    <property type="entry name" value="Adenylate_kinase_Adk"/>
    <property type="match status" value="1"/>
</dbReference>
<dbReference type="InterPro" id="IPR006259">
    <property type="entry name" value="Adenyl_kin_sub"/>
</dbReference>
<dbReference type="InterPro" id="IPR000850">
    <property type="entry name" value="Adenylat/UMP-CMP_kin"/>
</dbReference>
<dbReference type="InterPro" id="IPR033690">
    <property type="entry name" value="Adenylat_kinase_CS"/>
</dbReference>
<dbReference type="InterPro" id="IPR007862">
    <property type="entry name" value="Adenylate_kinase_lid-dom"/>
</dbReference>
<dbReference type="InterPro" id="IPR027417">
    <property type="entry name" value="P-loop_NTPase"/>
</dbReference>
<dbReference type="NCBIfam" id="TIGR01351">
    <property type="entry name" value="adk"/>
    <property type="match status" value="1"/>
</dbReference>
<dbReference type="NCBIfam" id="NF001380">
    <property type="entry name" value="PRK00279.1-2"/>
    <property type="match status" value="1"/>
</dbReference>
<dbReference type="NCBIfam" id="NF001381">
    <property type="entry name" value="PRK00279.1-3"/>
    <property type="match status" value="1"/>
</dbReference>
<dbReference type="NCBIfam" id="NF011100">
    <property type="entry name" value="PRK14527.1"/>
    <property type="match status" value="1"/>
</dbReference>
<dbReference type="PANTHER" id="PTHR23359">
    <property type="entry name" value="NUCLEOTIDE KINASE"/>
    <property type="match status" value="1"/>
</dbReference>
<dbReference type="Pfam" id="PF00406">
    <property type="entry name" value="ADK"/>
    <property type="match status" value="1"/>
</dbReference>
<dbReference type="Pfam" id="PF05191">
    <property type="entry name" value="ADK_lid"/>
    <property type="match status" value="1"/>
</dbReference>
<dbReference type="PRINTS" id="PR00094">
    <property type="entry name" value="ADENYLTKNASE"/>
</dbReference>
<dbReference type="SUPFAM" id="SSF52540">
    <property type="entry name" value="P-loop containing nucleoside triphosphate hydrolases"/>
    <property type="match status" value="1"/>
</dbReference>
<dbReference type="PROSITE" id="PS00113">
    <property type="entry name" value="ADENYLATE_KINASE"/>
    <property type="match status" value="1"/>
</dbReference>
<name>KAD_METTP</name>
<reference key="1">
    <citation type="submission" date="2006-10" db="EMBL/GenBank/DDBJ databases">
        <title>Complete sequence of Methanosaeta thermophila PT.</title>
        <authorList>
            <consortium name="US DOE Joint Genome Institute"/>
            <person name="Copeland A."/>
            <person name="Lucas S."/>
            <person name="Lapidus A."/>
            <person name="Barry K."/>
            <person name="Detter J.C."/>
            <person name="Glavina del Rio T."/>
            <person name="Hammon N."/>
            <person name="Israni S."/>
            <person name="Pitluck S."/>
            <person name="Chain P."/>
            <person name="Malfatti S."/>
            <person name="Shin M."/>
            <person name="Vergez L."/>
            <person name="Schmutz J."/>
            <person name="Larimer F."/>
            <person name="Land M."/>
            <person name="Hauser L."/>
            <person name="Kyrpides N."/>
            <person name="Kim E."/>
            <person name="Smith K.S."/>
            <person name="Ingram-Smith C."/>
            <person name="Richardson P."/>
        </authorList>
    </citation>
    <scope>NUCLEOTIDE SEQUENCE [LARGE SCALE GENOMIC DNA]</scope>
    <source>
        <strain>DSM 6194 / JCM 14653 / NBRC 101360 / PT</strain>
    </source>
</reference>
<protein>
    <recommendedName>
        <fullName evidence="1">Adenylate kinase</fullName>
        <shortName evidence="1">AK</shortName>
        <ecNumber evidence="1">2.7.4.3</ecNumber>
    </recommendedName>
    <alternativeName>
        <fullName evidence="1">ATP-AMP transphosphorylase</fullName>
    </alternativeName>
    <alternativeName>
        <fullName evidence="1">ATP:AMP phosphotransferase</fullName>
    </alternativeName>
    <alternativeName>
        <fullName evidence="1">Adenylate monophosphate kinase</fullName>
    </alternativeName>
</protein>
<feature type="chain" id="PRO_1000021745" description="Adenylate kinase">
    <location>
        <begin position="1"/>
        <end position="215"/>
    </location>
</feature>
<feature type="region of interest" description="NMP" evidence="1">
    <location>
        <begin position="30"/>
        <end position="59"/>
    </location>
</feature>
<feature type="region of interest" description="LID" evidence="1">
    <location>
        <begin position="126"/>
        <end position="162"/>
    </location>
</feature>
<feature type="binding site" evidence="1">
    <location>
        <begin position="10"/>
        <end position="15"/>
    </location>
    <ligand>
        <name>ATP</name>
        <dbReference type="ChEBI" id="CHEBI:30616"/>
    </ligand>
</feature>
<feature type="binding site" evidence="1">
    <location>
        <position position="31"/>
    </location>
    <ligand>
        <name>AMP</name>
        <dbReference type="ChEBI" id="CHEBI:456215"/>
    </ligand>
</feature>
<feature type="binding site" evidence="1">
    <location>
        <position position="36"/>
    </location>
    <ligand>
        <name>AMP</name>
        <dbReference type="ChEBI" id="CHEBI:456215"/>
    </ligand>
</feature>
<feature type="binding site" evidence="1">
    <location>
        <begin position="57"/>
        <end position="59"/>
    </location>
    <ligand>
        <name>AMP</name>
        <dbReference type="ChEBI" id="CHEBI:456215"/>
    </ligand>
</feature>
<feature type="binding site" evidence="1">
    <location>
        <begin position="85"/>
        <end position="88"/>
    </location>
    <ligand>
        <name>AMP</name>
        <dbReference type="ChEBI" id="CHEBI:456215"/>
    </ligand>
</feature>
<feature type="binding site" evidence="1">
    <location>
        <position position="92"/>
    </location>
    <ligand>
        <name>AMP</name>
        <dbReference type="ChEBI" id="CHEBI:456215"/>
    </ligand>
</feature>
<feature type="binding site" evidence="1">
    <location>
        <position position="127"/>
    </location>
    <ligand>
        <name>ATP</name>
        <dbReference type="ChEBI" id="CHEBI:30616"/>
    </ligand>
</feature>
<feature type="binding site" evidence="1">
    <location>
        <position position="130"/>
    </location>
    <ligand>
        <name>Zn(2+)</name>
        <dbReference type="ChEBI" id="CHEBI:29105"/>
        <note>structural</note>
    </ligand>
</feature>
<feature type="binding site" evidence="1">
    <location>
        <position position="132"/>
    </location>
    <ligand>
        <name>Zn(2+)</name>
        <dbReference type="ChEBI" id="CHEBI:29105"/>
        <note>structural</note>
    </ligand>
</feature>
<feature type="binding site" evidence="1">
    <location>
        <begin position="135"/>
        <end position="136"/>
    </location>
    <ligand>
        <name>ATP</name>
        <dbReference type="ChEBI" id="CHEBI:30616"/>
    </ligand>
</feature>
<feature type="binding site" evidence="1">
    <location>
        <position position="149"/>
    </location>
    <ligand>
        <name>Zn(2+)</name>
        <dbReference type="ChEBI" id="CHEBI:29105"/>
        <note>structural</note>
    </ligand>
</feature>
<feature type="binding site" evidence="1">
    <location>
        <position position="152"/>
    </location>
    <ligand>
        <name>Zn(2+)</name>
        <dbReference type="ChEBI" id="CHEBI:29105"/>
        <note>structural</note>
    </ligand>
</feature>
<feature type="binding site" evidence="1">
    <location>
        <position position="159"/>
    </location>
    <ligand>
        <name>AMP</name>
        <dbReference type="ChEBI" id="CHEBI:456215"/>
    </ligand>
</feature>
<feature type="binding site" evidence="1">
    <location>
        <position position="170"/>
    </location>
    <ligand>
        <name>AMP</name>
        <dbReference type="ChEBI" id="CHEBI:456215"/>
    </ligand>
</feature>
<feature type="binding site" evidence="1">
    <location>
        <position position="198"/>
    </location>
    <ligand>
        <name>ATP</name>
        <dbReference type="ChEBI" id="CHEBI:30616"/>
    </ligand>
</feature>
<sequence length="215" mass="23989">MNIVLLGPPGSGKGTQAKMIAEKFNVKHISTGDILREHVRNGTELGKEAKKYMDAGQLVPDSILIGIIKDRLSKPDVAGGYMLDGYPRTIPQAEALDKILPELKQKIDVVLNIDVPDEELVRRLSGRRMCKCGRSYHIIFNPPKVPGKCDECGGELYHRDDDKEEAILNRLKVYKQQTQPLIDYYTKAGLIANINGAGEINQIFDEISKVLSKFQ</sequence>
<accession>A0B9A2</accession>